<reference key="1">
    <citation type="journal article" date="1999" name="Nature">
        <title>Sequence and analysis of chromosome 4 of the plant Arabidopsis thaliana.</title>
        <authorList>
            <person name="Mayer K.F.X."/>
            <person name="Schueller C."/>
            <person name="Wambutt R."/>
            <person name="Murphy G."/>
            <person name="Volckaert G."/>
            <person name="Pohl T."/>
            <person name="Duesterhoeft A."/>
            <person name="Stiekema W."/>
            <person name="Entian K.-D."/>
            <person name="Terryn N."/>
            <person name="Harris B."/>
            <person name="Ansorge W."/>
            <person name="Brandt P."/>
            <person name="Grivell L.A."/>
            <person name="Rieger M."/>
            <person name="Weichselgartner M."/>
            <person name="de Simone V."/>
            <person name="Obermaier B."/>
            <person name="Mache R."/>
            <person name="Mueller M."/>
            <person name="Kreis M."/>
            <person name="Delseny M."/>
            <person name="Puigdomenech P."/>
            <person name="Watson M."/>
            <person name="Schmidtheini T."/>
            <person name="Reichert B."/>
            <person name="Portetelle D."/>
            <person name="Perez-Alonso M."/>
            <person name="Boutry M."/>
            <person name="Bancroft I."/>
            <person name="Vos P."/>
            <person name="Hoheisel J."/>
            <person name="Zimmermann W."/>
            <person name="Wedler H."/>
            <person name="Ridley P."/>
            <person name="Langham S.-A."/>
            <person name="McCullagh B."/>
            <person name="Bilham L."/>
            <person name="Robben J."/>
            <person name="van der Schueren J."/>
            <person name="Grymonprez B."/>
            <person name="Chuang Y.-J."/>
            <person name="Vandenbussche F."/>
            <person name="Braeken M."/>
            <person name="Weltjens I."/>
            <person name="Voet M."/>
            <person name="Bastiaens I."/>
            <person name="Aert R."/>
            <person name="Defoor E."/>
            <person name="Weitzenegger T."/>
            <person name="Bothe G."/>
            <person name="Ramsperger U."/>
            <person name="Hilbert H."/>
            <person name="Braun M."/>
            <person name="Holzer E."/>
            <person name="Brandt A."/>
            <person name="Peters S."/>
            <person name="van Staveren M."/>
            <person name="Dirkse W."/>
            <person name="Mooijman P."/>
            <person name="Klein Lankhorst R."/>
            <person name="Rose M."/>
            <person name="Hauf J."/>
            <person name="Koetter P."/>
            <person name="Berneiser S."/>
            <person name="Hempel S."/>
            <person name="Feldpausch M."/>
            <person name="Lamberth S."/>
            <person name="Van den Daele H."/>
            <person name="De Keyser A."/>
            <person name="Buysshaert C."/>
            <person name="Gielen J."/>
            <person name="Villarroel R."/>
            <person name="De Clercq R."/>
            <person name="van Montagu M."/>
            <person name="Rogers J."/>
            <person name="Cronin A."/>
            <person name="Quail M.A."/>
            <person name="Bray-Allen S."/>
            <person name="Clark L."/>
            <person name="Doggett J."/>
            <person name="Hall S."/>
            <person name="Kay M."/>
            <person name="Lennard N."/>
            <person name="McLay K."/>
            <person name="Mayes R."/>
            <person name="Pettett A."/>
            <person name="Rajandream M.A."/>
            <person name="Lyne M."/>
            <person name="Benes V."/>
            <person name="Rechmann S."/>
            <person name="Borkova D."/>
            <person name="Bloecker H."/>
            <person name="Scharfe M."/>
            <person name="Grimm M."/>
            <person name="Loehnert T.-H."/>
            <person name="Dose S."/>
            <person name="de Haan M."/>
            <person name="Maarse A.C."/>
            <person name="Schaefer M."/>
            <person name="Mueller-Auer S."/>
            <person name="Gabel C."/>
            <person name="Fuchs M."/>
            <person name="Fartmann B."/>
            <person name="Granderath K."/>
            <person name="Dauner D."/>
            <person name="Herzl A."/>
            <person name="Neumann S."/>
            <person name="Argiriou A."/>
            <person name="Vitale D."/>
            <person name="Liguori R."/>
            <person name="Piravandi E."/>
            <person name="Massenet O."/>
            <person name="Quigley F."/>
            <person name="Clabauld G."/>
            <person name="Muendlein A."/>
            <person name="Felber R."/>
            <person name="Schnabl S."/>
            <person name="Hiller R."/>
            <person name="Schmidt W."/>
            <person name="Lecharny A."/>
            <person name="Aubourg S."/>
            <person name="Chefdor F."/>
            <person name="Cooke R."/>
            <person name="Berger C."/>
            <person name="Monfort A."/>
            <person name="Casacuberta E."/>
            <person name="Gibbons T."/>
            <person name="Weber N."/>
            <person name="Vandenbol M."/>
            <person name="Bargues M."/>
            <person name="Terol J."/>
            <person name="Torres A."/>
            <person name="Perez-Perez A."/>
            <person name="Purnelle B."/>
            <person name="Bent E."/>
            <person name="Johnson S."/>
            <person name="Tacon D."/>
            <person name="Jesse T."/>
            <person name="Heijnen L."/>
            <person name="Schwarz S."/>
            <person name="Scholler P."/>
            <person name="Heber S."/>
            <person name="Francs P."/>
            <person name="Bielke C."/>
            <person name="Frishman D."/>
            <person name="Haase D."/>
            <person name="Lemcke K."/>
            <person name="Mewes H.-W."/>
            <person name="Stocker S."/>
            <person name="Zaccaria P."/>
            <person name="Bevan M."/>
            <person name="Wilson R.K."/>
            <person name="de la Bastide M."/>
            <person name="Habermann K."/>
            <person name="Parnell L."/>
            <person name="Dedhia N."/>
            <person name="Gnoj L."/>
            <person name="Schutz K."/>
            <person name="Huang E."/>
            <person name="Spiegel L."/>
            <person name="Sekhon M."/>
            <person name="Murray J."/>
            <person name="Sheet P."/>
            <person name="Cordes M."/>
            <person name="Abu-Threideh J."/>
            <person name="Stoneking T."/>
            <person name="Kalicki J."/>
            <person name="Graves T."/>
            <person name="Harmon G."/>
            <person name="Edwards J."/>
            <person name="Latreille P."/>
            <person name="Courtney L."/>
            <person name="Cloud J."/>
            <person name="Abbott A."/>
            <person name="Scott K."/>
            <person name="Johnson D."/>
            <person name="Minx P."/>
            <person name="Bentley D."/>
            <person name="Fulton B."/>
            <person name="Miller N."/>
            <person name="Greco T."/>
            <person name="Kemp K."/>
            <person name="Kramer J."/>
            <person name="Fulton L."/>
            <person name="Mardis E."/>
            <person name="Dante M."/>
            <person name="Pepin K."/>
            <person name="Hillier L.W."/>
            <person name="Nelson J."/>
            <person name="Spieth J."/>
            <person name="Ryan E."/>
            <person name="Andrews S."/>
            <person name="Geisel C."/>
            <person name="Layman D."/>
            <person name="Du H."/>
            <person name="Ali J."/>
            <person name="Berghoff A."/>
            <person name="Jones K."/>
            <person name="Drone K."/>
            <person name="Cotton M."/>
            <person name="Joshu C."/>
            <person name="Antonoiu B."/>
            <person name="Zidanic M."/>
            <person name="Strong C."/>
            <person name="Sun H."/>
            <person name="Lamar B."/>
            <person name="Yordan C."/>
            <person name="Ma P."/>
            <person name="Zhong J."/>
            <person name="Preston R."/>
            <person name="Vil D."/>
            <person name="Shekher M."/>
            <person name="Matero A."/>
            <person name="Shah R."/>
            <person name="Swaby I.K."/>
            <person name="O'Shaughnessy A."/>
            <person name="Rodriguez M."/>
            <person name="Hoffman J."/>
            <person name="Till S."/>
            <person name="Granat S."/>
            <person name="Shohdy N."/>
            <person name="Hasegawa A."/>
            <person name="Hameed A."/>
            <person name="Lodhi M."/>
            <person name="Johnson A."/>
            <person name="Chen E."/>
            <person name="Marra M.A."/>
            <person name="Martienssen R."/>
            <person name="McCombie W.R."/>
        </authorList>
    </citation>
    <scope>NUCLEOTIDE SEQUENCE [LARGE SCALE GENOMIC DNA]</scope>
    <source>
        <strain>cv. Columbia</strain>
    </source>
</reference>
<reference key="2">
    <citation type="journal article" date="2017" name="Plant J.">
        <title>Araport11: a complete reannotation of the Arabidopsis thaliana reference genome.</title>
        <authorList>
            <person name="Cheng C.Y."/>
            <person name="Krishnakumar V."/>
            <person name="Chan A.P."/>
            <person name="Thibaud-Nissen F."/>
            <person name="Schobel S."/>
            <person name="Town C.D."/>
        </authorList>
    </citation>
    <scope>GENOME REANNOTATION</scope>
    <source>
        <strain>cv. Columbia</strain>
    </source>
</reference>
<reference key="3">
    <citation type="journal article" date="2002" name="Mol. Genet. Genomics">
        <title>Genomic analysis of the terpenoid synthase (AtTPS) gene family of Arabidopsis thaliana.</title>
        <authorList>
            <person name="Aubourg S."/>
            <person name="Lecharny A."/>
            <person name="Bohlmann J."/>
        </authorList>
    </citation>
    <scope>GENE FAMILY</scope>
    <scope>NOMENCLATURE</scope>
</reference>
<reference key="4">
    <citation type="journal article" date="2003" name="Plant Cell">
        <title>Biosynthesis and emission of terpenoid volatiles from Arabidopsis flowers.</title>
        <authorList>
            <person name="Chen F."/>
            <person name="Tholl D."/>
            <person name="D'Auria J.C."/>
            <person name="Farooq A."/>
            <person name="Pichersky E."/>
            <person name="Gershenzon J."/>
        </authorList>
    </citation>
    <scope>TISSUE SPECIFICITY</scope>
</reference>
<reference key="5">
    <citation type="journal article" date="2003" name="Plant Mol. Biol.">
        <title>Genome organization in Arabidopsis thaliana: a survey for genes involved in isoprenoid and chlorophyll metabolism.</title>
        <authorList>
            <person name="Lange B.M."/>
            <person name="Ghassemian M."/>
        </authorList>
    </citation>
    <scope>GENE FAMILY</scope>
</reference>
<reference key="6">
    <citation type="journal article" date="2006" name="Arch. Biochem. Biophys.">
        <title>Microarray expression profiling and functional characterization of AtTPS genes: duplicated Arabidopsis thaliana sesquiterpene synthase genes At4g13280 and At4g13300 encode root-specific and wound-inducible (Z)-gamma-bisabolene synthases.</title>
        <authorList>
            <person name="Ro D.-K."/>
            <person name="Ehlting J."/>
            <person name="Keeling C.I."/>
            <person name="Lin R."/>
            <person name="Mattheus N."/>
            <person name="Bohlmann J."/>
        </authorList>
    </citation>
    <scope>FUNCTION</scope>
    <scope>CATALYTIC ACTIVITY</scope>
    <scope>TISSUE SPECIFICITY</scope>
    <scope>INDUCTION</scope>
</reference>
<sequence length="554" mass="63851">MESQTTFKYESLAFTKLSHCQWTDYFLSVPIDESELDVITREIDILKPEVMELLSSQGDDETSKRKVLLIQLLLSLGLAFHFENEIKNILEHAFRKIDDITGDEKDLSTISIMFRVFRTYGHNLPSSVFKRFTGDDGKFQQSLTEDAKGILSLYEAAHLGTTTDYILDEALKFTSSHLKSLLAGGTCRPHILRLIRNTLYLPQRWNMEAVIAREYISFYEQEEDHDKMLLRLAKLNFKLLQLHYIKELKSFIKWWMELGLTSKWPSQFRERIVEAWLAGLMMYFEPQFSGGRVIAAKFNYLLTILDDACDHYFSIHELTRLVACVERWSPDGIDTLEDISRSVFKLMLDVFDDIGKGVRSEGSSYHLKEMLEELNTLVRANLDLVKWARGIQVPSFEEHVEVGGIALTSYATLMYSFVGMGETAGKEAYEWVRSRPRLIKSLAAKGRLMDDITDFDSDMSNGFAANAINYYMKQFVVTKEEAILECQRMIVDINKTINEELLKTTSVPGRVLKQALNFGRLLELLYTKSDDIYNCSEGKLKEYIVTLLIDPIRL</sequence>
<feature type="chain" id="PRO_0000380671" description="(Z)-gamma-bisabolene synthase 1">
    <location>
        <begin position="1"/>
        <end position="554"/>
    </location>
</feature>
<feature type="short sequence motif" description="DDXXD motif">
    <location>
        <begin position="306"/>
        <end position="310"/>
    </location>
</feature>
<feature type="binding site" evidence="1">
    <location>
        <position position="306"/>
    </location>
    <ligand>
        <name>Mg(2+)</name>
        <dbReference type="ChEBI" id="CHEBI:18420"/>
        <label>1</label>
    </ligand>
</feature>
<feature type="binding site" evidence="1">
    <location>
        <position position="306"/>
    </location>
    <ligand>
        <name>Mg(2+)</name>
        <dbReference type="ChEBI" id="CHEBI:18420"/>
        <label>2</label>
    </ligand>
</feature>
<feature type="binding site" evidence="1">
    <location>
        <position position="310"/>
    </location>
    <ligand>
        <name>Mg(2+)</name>
        <dbReference type="ChEBI" id="CHEBI:18420"/>
        <label>1</label>
    </ligand>
</feature>
<feature type="binding site" evidence="1">
    <location>
        <position position="310"/>
    </location>
    <ligand>
        <name>Mg(2+)</name>
        <dbReference type="ChEBI" id="CHEBI:18420"/>
        <label>2</label>
    </ligand>
</feature>
<feature type="binding site" evidence="1">
    <location>
        <position position="450"/>
    </location>
    <ligand>
        <name>Mg(2+)</name>
        <dbReference type="ChEBI" id="CHEBI:18420"/>
        <label>3</label>
    </ligand>
</feature>
<feature type="binding site" evidence="1">
    <location>
        <position position="458"/>
    </location>
    <ligand>
        <name>Mg(2+)</name>
        <dbReference type="ChEBI" id="CHEBI:18420"/>
        <label>3</label>
    </ligand>
</feature>
<accession>Q9T0J9</accession>
<accession>F4JSZ6</accession>
<keyword id="KW-0963">Cytoplasm</keyword>
<keyword id="KW-0456">Lyase</keyword>
<keyword id="KW-0460">Magnesium</keyword>
<keyword id="KW-0464">Manganese</keyword>
<keyword id="KW-0479">Metal-binding</keyword>
<keyword id="KW-1185">Reference proteome</keyword>
<gene>
    <name type="primary">TPS12</name>
    <name type="ordered locus">At4g13280</name>
    <name type="ORF">T9E8.20</name>
</gene>
<comment type="function">
    <text evidence="3">Involved in sesquiterpene (C15) biosynthesis. The major product is (Z)-gamma-bisabolene with minor amounts of (E)-nerolidol and alpha-bisabolol.</text>
</comment>
<comment type="catalytic activity">
    <reaction evidence="3">
        <text>(2E,6E)-farnesyl diphosphate = (Z)-gamma-bisabolene + diphosphate</text>
        <dbReference type="Rhea" id="RHEA:26081"/>
        <dbReference type="ChEBI" id="CHEBI:33019"/>
        <dbReference type="ChEBI" id="CHEBI:49238"/>
        <dbReference type="ChEBI" id="CHEBI:175763"/>
        <dbReference type="EC" id="4.2.3.40"/>
    </reaction>
</comment>
<comment type="cofactor">
    <cofactor evidence="1">
        <name>Mg(2+)</name>
        <dbReference type="ChEBI" id="CHEBI:18420"/>
    </cofactor>
    <cofactor evidence="1">
        <name>Mn(2+)</name>
        <dbReference type="ChEBI" id="CHEBI:29035"/>
    </cofactor>
    <text evidence="1">Binds 3 Mg(2+) or Mn(2+) ions per subunit.</text>
</comment>
<comment type="pathway">
    <text>Secondary metabolite biosynthesis; terpenoid biosynthesis.</text>
</comment>
<comment type="subcellular location">
    <subcellularLocation>
        <location evidence="4">Cytoplasm</location>
    </subcellularLocation>
</comment>
<comment type="tissue specificity">
    <text evidence="2 3">Predominantly expressed in roots. Expressed in the cortex and the sub-epidermal layers of roots. Also detected in leaf hydathodes and flower stigmata.</text>
</comment>
<comment type="induction">
    <text evidence="3">By wounding.</text>
</comment>
<comment type="domain">
    <text>The Asp-Asp-Xaa-Xaa-Asp/Glu (DDXXD/E) motif is important for the catalytic activity, presumably through binding to Mg(2+).</text>
</comment>
<comment type="similarity">
    <text evidence="4">Belongs to the terpene synthase family. Tpsa subfamily.</text>
</comment>
<comment type="sequence caution" evidence="4">
    <conflict type="erroneous gene model prediction">
        <sequence resource="EMBL-CDS" id="AEE83258"/>
    </conflict>
</comment>
<comment type="sequence caution" evidence="4">
    <conflict type="erroneous gene model prediction">
        <sequence resource="EMBL-CDS" id="CAB40763"/>
    </conflict>
</comment>
<comment type="sequence caution" evidence="4">
    <conflict type="erroneous gene model prediction">
        <sequence resource="EMBL-CDS" id="CAB78370"/>
    </conflict>
</comment>
<evidence type="ECO:0000250" key="1"/>
<evidence type="ECO:0000269" key="2">
    <source>
    </source>
</evidence>
<evidence type="ECO:0000269" key="3">
    <source>
    </source>
</evidence>
<evidence type="ECO:0000305" key="4"/>
<organism>
    <name type="scientific">Arabidopsis thaliana</name>
    <name type="common">Mouse-ear cress</name>
    <dbReference type="NCBI Taxonomy" id="3702"/>
    <lineage>
        <taxon>Eukaryota</taxon>
        <taxon>Viridiplantae</taxon>
        <taxon>Streptophyta</taxon>
        <taxon>Embryophyta</taxon>
        <taxon>Tracheophyta</taxon>
        <taxon>Spermatophyta</taxon>
        <taxon>Magnoliopsida</taxon>
        <taxon>eudicotyledons</taxon>
        <taxon>Gunneridae</taxon>
        <taxon>Pentapetalae</taxon>
        <taxon>rosids</taxon>
        <taxon>malvids</taxon>
        <taxon>Brassicales</taxon>
        <taxon>Brassicaceae</taxon>
        <taxon>Camelineae</taxon>
        <taxon>Arabidopsis</taxon>
    </lineage>
</organism>
<proteinExistence type="evidence at protein level"/>
<protein>
    <recommendedName>
        <fullName>(Z)-gamma-bisabolene synthase 1</fullName>
        <ecNumber>4.2.3.40</ecNumber>
    </recommendedName>
    <alternativeName>
        <fullName>Terpenoid synthase 12</fullName>
        <shortName>AtTPS12</shortName>
    </alternativeName>
</protein>
<name>GBIS1_ARATH</name>
<dbReference type="EC" id="4.2.3.40"/>
<dbReference type="EMBL" id="AL049608">
    <property type="protein sequence ID" value="CAB40763.1"/>
    <property type="status" value="ALT_SEQ"/>
    <property type="molecule type" value="Genomic_DNA"/>
</dbReference>
<dbReference type="EMBL" id="AL161536">
    <property type="protein sequence ID" value="CAB78370.1"/>
    <property type="status" value="ALT_SEQ"/>
    <property type="molecule type" value="Genomic_DNA"/>
</dbReference>
<dbReference type="EMBL" id="CP002687">
    <property type="protein sequence ID" value="AEE83258.1"/>
    <property type="status" value="ALT_SEQ"/>
    <property type="molecule type" value="Genomic_DNA"/>
</dbReference>
<dbReference type="EMBL" id="CP002687">
    <property type="protein sequence ID" value="ANM66087.1"/>
    <property type="molecule type" value="Genomic_DNA"/>
</dbReference>
<dbReference type="PIR" id="T06285">
    <property type="entry name" value="T06285"/>
</dbReference>
<dbReference type="RefSeq" id="NP_001328007.1">
    <property type="nucleotide sequence ID" value="NM_001340846.1"/>
</dbReference>
<dbReference type="RefSeq" id="NP_193064.2">
    <property type="nucleotide sequence ID" value="NM_117401.2"/>
</dbReference>
<dbReference type="SMR" id="Q9T0J9"/>
<dbReference type="FunCoup" id="Q9T0J9">
    <property type="interactions" value="41"/>
</dbReference>
<dbReference type="STRING" id="3702.Q9T0J9"/>
<dbReference type="iPTMnet" id="Q9T0J9"/>
<dbReference type="PaxDb" id="3702-AT4G13280.1"/>
<dbReference type="ProteomicsDB" id="248612"/>
<dbReference type="EnsemblPlants" id="AT4G13280.2">
    <property type="protein sequence ID" value="AT4G13280.2"/>
    <property type="gene ID" value="AT4G13280"/>
</dbReference>
<dbReference type="GeneID" id="826958"/>
<dbReference type="Gramene" id="AT4G13280.2">
    <property type="protein sequence ID" value="AT4G13280.2"/>
    <property type="gene ID" value="AT4G13280"/>
</dbReference>
<dbReference type="KEGG" id="ath:AT4G13280"/>
<dbReference type="Araport" id="AT4G13280"/>
<dbReference type="TAIR" id="AT4G13280">
    <property type="gene designation" value="TPS12"/>
</dbReference>
<dbReference type="eggNOG" id="ENOG502QUCN">
    <property type="taxonomic scope" value="Eukaryota"/>
</dbReference>
<dbReference type="InParanoid" id="Q9T0J9"/>
<dbReference type="OMA" id="MIANINK"/>
<dbReference type="PhylomeDB" id="Q9T0J9"/>
<dbReference type="BioCyc" id="ARA:AT4G13280-MONOMER"/>
<dbReference type="BioCyc" id="MetaCyc:AT4G13280-MONOMER"/>
<dbReference type="UniPathway" id="UPA00213"/>
<dbReference type="PRO" id="PR:Q9T0J9"/>
<dbReference type="Proteomes" id="UP000006548">
    <property type="component" value="Chromosome 4"/>
</dbReference>
<dbReference type="ExpressionAtlas" id="Q9T0J9">
    <property type="expression patterns" value="baseline and differential"/>
</dbReference>
<dbReference type="GO" id="GO:0005777">
    <property type="term" value="C:peroxisome"/>
    <property type="evidence" value="ECO:0000314"/>
    <property type="project" value="TAIR"/>
</dbReference>
<dbReference type="GO" id="GO:0052683">
    <property type="term" value="F:(Z)-gamma-bisabolene synthase activity"/>
    <property type="evidence" value="ECO:0007669"/>
    <property type="project" value="UniProtKB-EC"/>
</dbReference>
<dbReference type="GO" id="GO:0009975">
    <property type="term" value="F:cyclase activity"/>
    <property type="evidence" value="ECO:0000314"/>
    <property type="project" value="TAIR"/>
</dbReference>
<dbReference type="GO" id="GO:0000287">
    <property type="term" value="F:magnesium ion binding"/>
    <property type="evidence" value="ECO:0007669"/>
    <property type="project" value="InterPro"/>
</dbReference>
<dbReference type="GO" id="GO:0010333">
    <property type="term" value="F:terpene synthase activity"/>
    <property type="evidence" value="ECO:0007669"/>
    <property type="project" value="InterPro"/>
</dbReference>
<dbReference type="GO" id="GO:0016102">
    <property type="term" value="P:diterpenoid biosynthetic process"/>
    <property type="evidence" value="ECO:0007669"/>
    <property type="project" value="InterPro"/>
</dbReference>
<dbReference type="GO" id="GO:0045338">
    <property type="term" value="P:farnesyl diphosphate metabolic process"/>
    <property type="evidence" value="ECO:0000314"/>
    <property type="project" value="TAIR"/>
</dbReference>
<dbReference type="GO" id="GO:0009611">
    <property type="term" value="P:response to wounding"/>
    <property type="evidence" value="ECO:0000270"/>
    <property type="project" value="TAIR"/>
</dbReference>
<dbReference type="GO" id="GO:0016106">
    <property type="term" value="P:sesquiterpenoid biosynthetic process"/>
    <property type="evidence" value="ECO:0000314"/>
    <property type="project" value="TAIR"/>
</dbReference>
<dbReference type="CDD" id="cd00684">
    <property type="entry name" value="Terpene_cyclase_plant_C1"/>
    <property type="match status" value="1"/>
</dbReference>
<dbReference type="FunFam" id="1.10.600.10:FF:000007">
    <property type="entry name" value="Isoprene synthase, chloroplastic"/>
    <property type="match status" value="1"/>
</dbReference>
<dbReference type="FunFam" id="1.50.10.130:FF:000001">
    <property type="entry name" value="Isoprene synthase, chloroplastic"/>
    <property type="match status" value="1"/>
</dbReference>
<dbReference type="Gene3D" id="1.10.600.10">
    <property type="entry name" value="Farnesyl Diphosphate Synthase"/>
    <property type="match status" value="1"/>
</dbReference>
<dbReference type="Gene3D" id="1.50.10.130">
    <property type="entry name" value="Terpene synthase, N-terminal domain"/>
    <property type="match status" value="1"/>
</dbReference>
<dbReference type="InterPro" id="IPR008949">
    <property type="entry name" value="Isoprenoid_synthase_dom_sf"/>
</dbReference>
<dbReference type="InterPro" id="IPR044814">
    <property type="entry name" value="Terpene_cyclase_plant_C1"/>
</dbReference>
<dbReference type="InterPro" id="IPR001906">
    <property type="entry name" value="Terpene_synth_N"/>
</dbReference>
<dbReference type="InterPro" id="IPR036965">
    <property type="entry name" value="Terpene_synth_N_sf"/>
</dbReference>
<dbReference type="InterPro" id="IPR050148">
    <property type="entry name" value="Terpene_synthase-like"/>
</dbReference>
<dbReference type="InterPro" id="IPR005630">
    <property type="entry name" value="Terpene_synthase_metal-bd"/>
</dbReference>
<dbReference type="InterPro" id="IPR008930">
    <property type="entry name" value="Terpenoid_cyclase/PrenylTrfase"/>
</dbReference>
<dbReference type="PANTHER" id="PTHR31225">
    <property type="entry name" value="OS04G0344100 PROTEIN-RELATED"/>
    <property type="match status" value="1"/>
</dbReference>
<dbReference type="PANTHER" id="PTHR31225:SF242">
    <property type="entry name" value="TERPENOID SYNTHASE 9"/>
    <property type="match status" value="1"/>
</dbReference>
<dbReference type="Pfam" id="PF01397">
    <property type="entry name" value="Terpene_synth"/>
    <property type="match status" value="1"/>
</dbReference>
<dbReference type="Pfam" id="PF03936">
    <property type="entry name" value="Terpene_synth_C"/>
    <property type="match status" value="1"/>
</dbReference>
<dbReference type="SUPFAM" id="SSF48239">
    <property type="entry name" value="Terpenoid cyclases/Protein prenyltransferases"/>
    <property type="match status" value="1"/>
</dbReference>
<dbReference type="SUPFAM" id="SSF48576">
    <property type="entry name" value="Terpenoid synthases"/>
    <property type="match status" value="1"/>
</dbReference>